<comment type="function">
    <text evidence="1">Packages the positive strand viral genome RNA into a helical ribonucleocapsid (RNP) and plays a fundamental role during virion assembly through its interactions with the viral genome and membrane protein M. Plays an important role in enhancing the efficiency of subgenomic viral RNA transcription as well as viral replication.</text>
</comment>
<comment type="subunit">
    <text evidence="1">Homooligomer. Both monomeric and oligomeric forms interact with RNA. Interacts with protein M. Interacts with NSP3; this interaction serves to tether the genome to the newly translated replicase-transcriptase complex at a very early stage of infection.</text>
</comment>
<comment type="subcellular location">
    <subcellularLocation>
        <location evidence="1">Virion</location>
    </subcellularLocation>
    <subcellularLocation>
        <location evidence="1">Host endoplasmic reticulum-Golgi intermediate compartment</location>
    </subcellularLocation>
    <subcellularLocation>
        <location evidence="1">Host Golgi apparatus</location>
    </subcellularLocation>
    <text evidence="1">Located inside the virion, complexed with the viral RNA. Probably associates with ER-derived membranes where it participates in viral RNA synthesis and virus budding.</text>
</comment>
<comment type="PTM">
    <text evidence="1">ADP-ribosylated. The ADP-ribosylation is retained in the virion during infection.</text>
</comment>
<comment type="PTM">
    <text evidence="1">Phosphorylated on serine and threonine residues.</text>
</comment>
<comment type="similarity">
    <text evidence="1">Belongs to the alphacoronavirus nucleocapsid protein family.</text>
</comment>
<keyword id="KW-0013">ADP-ribosylation</keyword>
<keyword id="KW-1040">Host Golgi apparatus</keyword>
<keyword id="KW-0597">Phosphoprotein</keyword>
<keyword id="KW-0687">Ribonucleoprotein</keyword>
<keyword id="KW-0694">RNA-binding</keyword>
<keyword id="KW-0804">Transcription</keyword>
<keyword id="KW-0805">Transcription regulation</keyword>
<keyword id="KW-0543">Viral nucleoprotein</keyword>
<keyword id="KW-0946">Virion</keyword>
<sequence>MANQGQRVSWGDESTKIRGRSNSRGRKINNIPLSFFNPITLQQGAKFWNSCPRDFVPKGIGNRDQQIGYWNRQTRYRMVKGQRKELPERWFFYYLGTGPHADAKFKDKLDGVVWVAKDGAMNKPTTLGSRGANNESKALKFDGKVPGEFQLEVNQSRDNSRSRSQSRSRSRNRSQSRGRQQSNNKKDDSVEQAVLAALKKLGVYTEKQQQRSRSKSKERSNSKTRDTTPKNENKHTWKRTAGKGDVTRFYGARSSSANFGDSDLVANGSSAKHYPQLAECVPSVSSILFGSYWTSKEDGDQIEVTFTHKYHLPKDHPKTEQFLQQINAYACPSEVAKEQRKRKSRSKSAERSEQEVVPDSLIENYTDVFDDTQVEMIDEVTN</sequence>
<protein>
    <recommendedName>
        <fullName evidence="1">Nucleoprotein</fullName>
    </recommendedName>
    <alternativeName>
        <fullName evidence="1">Nucleocapsid protein</fullName>
        <shortName evidence="1">NC</shortName>
        <shortName evidence="1">Protein N</shortName>
    </alternativeName>
</protein>
<name>NCAP_CVPR8</name>
<organism>
    <name type="scientific">Porcine respiratory coronavirus (strain 86/137004 / isolate British)</name>
    <name type="common">PRCoV</name>
    <name type="synonym">PRCV</name>
    <dbReference type="NCBI Taxonomy" id="33736"/>
    <lineage>
        <taxon>Viruses</taxon>
        <taxon>Riboviria</taxon>
        <taxon>Orthornavirae</taxon>
        <taxon>Pisuviricota</taxon>
        <taxon>Pisoniviricetes</taxon>
        <taxon>Nidovirales</taxon>
        <taxon>Cornidovirineae</taxon>
        <taxon>Coronaviridae</taxon>
        <taxon>Orthocoronavirinae</taxon>
        <taxon>Alphacoronavirus</taxon>
        <taxon>Tegacovirus</taxon>
        <taxon>Alphacoronavirus 1</taxon>
    </lineage>
</organism>
<dbReference type="EMBL" id="X60056">
    <property type="protein sequence ID" value="CAA42657.1"/>
    <property type="molecule type" value="Genomic_RNA"/>
</dbReference>
<dbReference type="PIR" id="S24282">
    <property type="entry name" value="S24282"/>
</dbReference>
<dbReference type="SMR" id="P33463"/>
<dbReference type="GO" id="GO:0044172">
    <property type="term" value="C:host cell endoplasmic reticulum-Golgi intermediate compartment"/>
    <property type="evidence" value="ECO:0007669"/>
    <property type="project" value="UniProtKB-SubCell"/>
</dbReference>
<dbReference type="GO" id="GO:0044177">
    <property type="term" value="C:host cell Golgi apparatus"/>
    <property type="evidence" value="ECO:0007669"/>
    <property type="project" value="UniProtKB-SubCell"/>
</dbReference>
<dbReference type="GO" id="GO:1990904">
    <property type="term" value="C:ribonucleoprotein complex"/>
    <property type="evidence" value="ECO:0007669"/>
    <property type="project" value="UniProtKB-KW"/>
</dbReference>
<dbReference type="GO" id="GO:0019013">
    <property type="term" value="C:viral nucleocapsid"/>
    <property type="evidence" value="ECO:0007669"/>
    <property type="project" value="UniProtKB-KW"/>
</dbReference>
<dbReference type="GO" id="GO:0003723">
    <property type="term" value="F:RNA binding"/>
    <property type="evidence" value="ECO:0007669"/>
    <property type="project" value="UniProtKB-KW"/>
</dbReference>
<dbReference type="CDD" id="cd21595">
    <property type="entry name" value="CoV_N-CTD"/>
    <property type="match status" value="1"/>
</dbReference>
<dbReference type="CDD" id="cd21554">
    <property type="entry name" value="CoV_N-NTD"/>
    <property type="match status" value="1"/>
</dbReference>
<dbReference type="HAMAP" id="MF_04095">
    <property type="entry name" value="ALPHA_CORONA_NCAP"/>
    <property type="match status" value="1"/>
</dbReference>
<dbReference type="InterPro" id="IPR044344">
    <property type="entry name" value="N_prot_C_CoV"/>
</dbReference>
<dbReference type="InterPro" id="IPR044345">
    <property type="entry name" value="N_prot_N_CoV"/>
</dbReference>
<dbReference type="InterPro" id="IPR042548">
    <property type="entry name" value="NCAP_aCoV"/>
</dbReference>
<dbReference type="InterPro" id="IPR001218">
    <property type="entry name" value="Nucleocap_CoV"/>
</dbReference>
<dbReference type="InterPro" id="IPR037179">
    <property type="entry name" value="Nucleocapsid_C"/>
</dbReference>
<dbReference type="InterPro" id="IPR037195">
    <property type="entry name" value="Nucleocapsid_N"/>
</dbReference>
<dbReference type="Pfam" id="PF00937">
    <property type="entry name" value="CoV_nucleocap"/>
    <property type="match status" value="1"/>
</dbReference>
<dbReference type="PIRSF" id="PIRSF003888">
    <property type="entry name" value="Corona_nucleocap"/>
    <property type="match status" value="1"/>
</dbReference>
<dbReference type="SUPFAM" id="SSF110304">
    <property type="entry name" value="Coronavirus RNA-binding domain"/>
    <property type="match status" value="1"/>
</dbReference>
<dbReference type="SUPFAM" id="SSF103068">
    <property type="entry name" value="Nucleocapsid protein dimerization domain"/>
    <property type="match status" value="1"/>
</dbReference>
<dbReference type="PROSITE" id="PS51929">
    <property type="entry name" value="COV_N_CTD"/>
    <property type="match status" value="1"/>
</dbReference>
<dbReference type="PROSITE" id="PS51928">
    <property type="entry name" value="COV_N_NTD"/>
    <property type="match status" value="1"/>
</dbReference>
<organismHost>
    <name type="scientific">Sus scrofa</name>
    <name type="common">Pig</name>
    <dbReference type="NCBI Taxonomy" id="9823"/>
</organismHost>
<evidence type="ECO:0000255" key="1">
    <source>
        <dbReference type="HAMAP-Rule" id="MF_04095"/>
    </source>
</evidence>
<evidence type="ECO:0000255" key="2">
    <source>
        <dbReference type="PROSITE-ProRule" id="PRU01276"/>
    </source>
</evidence>
<evidence type="ECO:0000255" key="3">
    <source>
        <dbReference type="PROSITE-ProRule" id="PRU01277"/>
    </source>
</evidence>
<evidence type="ECO:0000256" key="4">
    <source>
        <dbReference type="SAM" id="MobiDB-lite"/>
    </source>
</evidence>
<accession>P33463</accession>
<feature type="chain" id="PRO_0000106015" description="Nucleoprotein">
    <location>
        <begin position="1"/>
        <end position="382"/>
    </location>
</feature>
<feature type="domain" description="CoV N NTD" evidence="2">
    <location>
        <begin position="31"/>
        <end position="153"/>
    </location>
</feature>
<feature type="domain" description="CoV N CTD" evidence="3">
    <location>
        <begin position="224"/>
        <end position="337"/>
    </location>
</feature>
<feature type="region of interest" description="Disordered" evidence="4">
    <location>
        <begin position="1"/>
        <end position="24"/>
    </location>
</feature>
<feature type="region of interest" description="RNA-binding" evidence="1">
    <location>
        <begin position="33"/>
        <end position="159"/>
    </location>
</feature>
<feature type="region of interest" description="Disordered" evidence="4">
    <location>
        <begin position="150"/>
        <end position="190"/>
    </location>
</feature>
<feature type="region of interest" description="Disordered" evidence="4">
    <location>
        <begin position="202"/>
        <end position="240"/>
    </location>
</feature>
<feature type="region of interest" description="Dimerization" evidence="1">
    <location>
        <begin position="231"/>
        <end position="334"/>
    </location>
</feature>
<feature type="region of interest" description="Disordered" evidence="4">
    <location>
        <begin position="334"/>
        <end position="362"/>
    </location>
</feature>
<feature type="compositionally biased region" description="Low complexity" evidence="4">
    <location>
        <begin position="154"/>
        <end position="163"/>
    </location>
</feature>
<feature type="compositionally biased region" description="Basic residues" evidence="4">
    <location>
        <begin position="164"/>
        <end position="176"/>
    </location>
</feature>
<feature type="compositionally biased region" description="Basic and acidic residues" evidence="4">
    <location>
        <begin position="215"/>
        <end position="235"/>
    </location>
</feature>
<feature type="modified residue" description="Phosphoserine; by host" evidence="1">
    <location>
        <position position="9"/>
    </location>
</feature>
<feature type="modified residue" description="Phosphoserine; by host" evidence="1">
    <location>
        <position position="156"/>
    </location>
</feature>
<feature type="modified residue" description="Phosphoserine; by host" evidence="1">
    <location>
        <position position="254"/>
    </location>
</feature>
<feature type="modified residue" description="Phosphoserine; by host" evidence="1">
    <location>
        <position position="256"/>
    </location>
</feature>
<reference key="1">
    <citation type="journal article" date="1991" name="Virus Res.">
        <title>The cloning and sequencing of the virion protein genes from a British isolate of porcine respiratory coronavirus: comparison with transmissible gastroenteritis virus genes.</title>
        <authorList>
            <person name="Britton P."/>
            <person name="Mawditt K.L."/>
            <person name="Page K.W."/>
        </authorList>
    </citation>
    <scope>NUCLEOTIDE SEQUENCE [GENOMIC RNA]</scope>
</reference>
<proteinExistence type="inferred from homology"/>
<gene>
    <name evidence="1" type="primary">N</name>
</gene>